<dbReference type="EMBL" id="L77117">
    <property type="protein sequence ID" value="AAB99158.1"/>
    <property type="molecule type" value="Genomic_DNA"/>
</dbReference>
<dbReference type="PIR" id="G64443">
    <property type="entry name" value="G64443"/>
</dbReference>
<dbReference type="SMR" id="Q58552"/>
<dbReference type="STRING" id="243232.MJ_1152"/>
<dbReference type="PaxDb" id="243232-MJ_1152"/>
<dbReference type="EnsemblBacteria" id="AAB99158">
    <property type="protein sequence ID" value="AAB99158"/>
    <property type="gene ID" value="MJ_1152"/>
</dbReference>
<dbReference type="KEGG" id="mja:MJ_1152"/>
<dbReference type="eggNOG" id="arCOG09567">
    <property type="taxonomic scope" value="Archaea"/>
</dbReference>
<dbReference type="HOGENOM" id="CLU_2766168_0_0_2"/>
<dbReference type="InParanoid" id="Q58552"/>
<dbReference type="OrthoDB" id="382708at2157"/>
<dbReference type="Proteomes" id="UP000000805">
    <property type="component" value="Chromosome"/>
</dbReference>
<reference key="1">
    <citation type="journal article" date="1996" name="Science">
        <title>Complete genome sequence of the methanogenic archaeon, Methanococcus jannaschii.</title>
        <authorList>
            <person name="Bult C.J."/>
            <person name="White O."/>
            <person name="Olsen G.J."/>
            <person name="Zhou L."/>
            <person name="Fleischmann R.D."/>
            <person name="Sutton G.G."/>
            <person name="Blake J.A."/>
            <person name="FitzGerald L.M."/>
            <person name="Clayton R.A."/>
            <person name="Gocayne J.D."/>
            <person name="Kerlavage A.R."/>
            <person name="Dougherty B.A."/>
            <person name="Tomb J.-F."/>
            <person name="Adams M.D."/>
            <person name="Reich C.I."/>
            <person name="Overbeek R."/>
            <person name="Kirkness E.F."/>
            <person name="Weinstock K.G."/>
            <person name="Merrick J.M."/>
            <person name="Glodek A."/>
            <person name="Scott J.L."/>
            <person name="Geoghagen N.S.M."/>
            <person name="Weidman J.F."/>
            <person name="Fuhrmann J.L."/>
            <person name="Nguyen D."/>
            <person name="Utterback T.R."/>
            <person name="Kelley J.M."/>
            <person name="Peterson J.D."/>
            <person name="Sadow P.W."/>
            <person name="Hanna M.C."/>
            <person name="Cotton M.D."/>
            <person name="Roberts K.M."/>
            <person name="Hurst M.A."/>
            <person name="Kaine B.P."/>
            <person name="Borodovsky M."/>
            <person name="Klenk H.-P."/>
            <person name="Fraser C.M."/>
            <person name="Smith H.O."/>
            <person name="Woese C.R."/>
            <person name="Venter J.C."/>
        </authorList>
    </citation>
    <scope>NUCLEOTIDE SEQUENCE [LARGE SCALE GENOMIC DNA]</scope>
    <source>
        <strain>ATCC 43067 / DSM 2661 / JAL-1 / JCM 10045 / NBRC 100440</strain>
    </source>
</reference>
<name>Y1152_METJA</name>
<accession>Q58552</accession>
<proteinExistence type="predicted"/>
<organism>
    <name type="scientific">Methanocaldococcus jannaschii (strain ATCC 43067 / DSM 2661 / JAL-1 / JCM 10045 / NBRC 100440)</name>
    <name type="common">Methanococcus jannaschii</name>
    <dbReference type="NCBI Taxonomy" id="243232"/>
    <lineage>
        <taxon>Archaea</taxon>
        <taxon>Methanobacteriati</taxon>
        <taxon>Methanobacteriota</taxon>
        <taxon>Methanomada group</taxon>
        <taxon>Methanococci</taxon>
        <taxon>Methanococcales</taxon>
        <taxon>Methanocaldococcaceae</taxon>
        <taxon>Methanocaldococcus</taxon>
    </lineage>
</organism>
<feature type="chain" id="PRO_0000107190" description="Uncharacterized protein MJ1152">
    <location>
        <begin position="1"/>
        <end position="73"/>
    </location>
</feature>
<gene>
    <name type="ordered locus">MJ1152</name>
</gene>
<sequence length="73" mass="8760">MVIMKKHVKRIVKKYLGSKKAESEEEDILPDWIVKVKNEIENITYEEYVKDVDKFFNEVKKKGIEKVLFDDIK</sequence>
<protein>
    <recommendedName>
        <fullName>Uncharacterized protein MJ1152</fullName>
    </recommendedName>
</protein>
<keyword id="KW-1185">Reference proteome</keyword>